<name>PNP_VIBCM</name>
<organism>
    <name type="scientific">Vibrio cholerae serotype O1 (strain M66-2)</name>
    <dbReference type="NCBI Taxonomy" id="579112"/>
    <lineage>
        <taxon>Bacteria</taxon>
        <taxon>Pseudomonadati</taxon>
        <taxon>Pseudomonadota</taxon>
        <taxon>Gammaproteobacteria</taxon>
        <taxon>Vibrionales</taxon>
        <taxon>Vibrionaceae</taxon>
        <taxon>Vibrio</taxon>
    </lineage>
</organism>
<protein>
    <recommendedName>
        <fullName evidence="1">Polyribonucleotide nucleotidyltransferase</fullName>
        <ecNumber evidence="1">2.7.7.8</ecNumber>
    </recommendedName>
    <alternativeName>
        <fullName evidence="1">Polynucleotide phosphorylase</fullName>
        <shortName evidence="1">PNPase</shortName>
    </alternativeName>
</protein>
<gene>
    <name evidence="1" type="primary">pnp</name>
    <name type="ordered locus">VCM66_0605</name>
</gene>
<keyword id="KW-0963">Cytoplasm</keyword>
<keyword id="KW-0460">Magnesium</keyword>
<keyword id="KW-0479">Metal-binding</keyword>
<keyword id="KW-0548">Nucleotidyltransferase</keyword>
<keyword id="KW-0694">RNA-binding</keyword>
<keyword id="KW-0808">Transferase</keyword>
<proteinExistence type="inferred from homology"/>
<dbReference type="EC" id="2.7.7.8" evidence="1"/>
<dbReference type="EMBL" id="CP001233">
    <property type="protein sequence ID" value="ACP04928.1"/>
    <property type="molecule type" value="Genomic_DNA"/>
</dbReference>
<dbReference type="RefSeq" id="WP_000462070.1">
    <property type="nucleotide sequence ID" value="NC_012578.1"/>
</dbReference>
<dbReference type="SMR" id="C3LSQ2"/>
<dbReference type="GeneID" id="69720597"/>
<dbReference type="KEGG" id="vcm:VCM66_0605"/>
<dbReference type="HOGENOM" id="CLU_004217_2_2_6"/>
<dbReference type="Proteomes" id="UP000001217">
    <property type="component" value="Chromosome I"/>
</dbReference>
<dbReference type="GO" id="GO:0005829">
    <property type="term" value="C:cytosol"/>
    <property type="evidence" value="ECO:0007669"/>
    <property type="project" value="TreeGrafter"/>
</dbReference>
<dbReference type="GO" id="GO:0000175">
    <property type="term" value="F:3'-5'-RNA exonuclease activity"/>
    <property type="evidence" value="ECO:0007669"/>
    <property type="project" value="TreeGrafter"/>
</dbReference>
<dbReference type="GO" id="GO:0000287">
    <property type="term" value="F:magnesium ion binding"/>
    <property type="evidence" value="ECO:0007669"/>
    <property type="project" value="UniProtKB-UniRule"/>
</dbReference>
<dbReference type="GO" id="GO:0004654">
    <property type="term" value="F:polyribonucleotide nucleotidyltransferase activity"/>
    <property type="evidence" value="ECO:0007669"/>
    <property type="project" value="UniProtKB-UniRule"/>
</dbReference>
<dbReference type="GO" id="GO:0003723">
    <property type="term" value="F:RNA binding"/>
    <property type="evidence" value="ECO:0007669"/>
    <property type="project" value="UniProtKB-UniRule"/>
</dbReference>
<dbReference type="GO" id="GO:0006402">
    <property type="term" value="P:mRNA catabolic process"/>
    <property type="evidence" value="ECO:0007669"/>
    <property type="project" value="UniProtKB-UniRule"/>
</dbReference>
<dbReference type="GO" id="GO:0006396">
    <property type="term" value="P:RNA processing"/>
    <property type="evidence" value="ECO:0007669"/>
    <property type="project" value="InterPro"/>
</dbReference>
<dbReference type="CDD" id="cd02393">
    <property type="entry name" value="KH-I_PNPase"/>
    <property type="match status" value="1"/>
</dbReference>
<dbReference type="CDD" id="cd11363">
    <property type="entry name" value="RNase_PH_PNPase_1"/>
    <property type="match status" value="1"/>
</dbReference>
<dbReference type="CDD" id="cd11364">
    <property type="entry name" value="RNase_PH_PNPase_2"/>
    <property type="match status" value="1"/>
</dbReference>
<dbReference type="CDD" id="cd04472">
    <property type="entry name" value="S1_PNPase"/>
    <property type="match status" value="1"/>
</dbReference>
<dbReference type="FunFam" id="2.40.50.140:FF:000023">
    <property type="entry name" value="Polyribonucleotide nucleotidyltransferase"/>
    <property type="match status" value="1"/>
</dbReference>
<dbReference type="FunFam" id="3.30.1370.10:FF:000001">
    <property type="entry name" value="Polyribonucleotide nucleotidyltransferase"/>
    <property type="match status" value="1"/>
</dbReference>
<dbReference type="FunFam" id="3.30.230.70:FF:000001">
    <property type="entry name" value="Polyribonucleotide nucleotidyltransferase"/>
    <property type="match status" value="1"/>
</dbReference>
<dbReference type="FunFam" id="3.30.230.70:FF:000002">
    <property type="entry name" value="Polyribonucleotide nucleotidyltransferase"/>
    <property type="match status" value="1"/>
</dbReference>
<dbReference type="Gene3D" id="3.30.230.70">
    <property type="entry name" value="GHMP Kinase, N-terminal domain"/>
    <property type="match status" value="2"/>
</dbReference>
<dbReference type="Gene3D" id="3.30.1370.10">
    <property type="entry name" value="K Homology domain, type 1"/>
    <property type="match status" value="1"/>
</dbReference>
<dbReference type="Gene3D" id="2.40.50.140">
    <property type="entry name" value="Nucleic acid-binding proteins"/>
    <property type="match status" value="1"/>
</dbReference>
<dbReference type="HAMAP" id="MF_01595">
    <property type="entry name" value="PNPase"/>
    <property type="match status" value="1"/>
</dbReference>
<dbReference type="InterPro" id="IPR001247">
    <property type="entry name" value="ExoRNase_PH_dom1"/>
</dbReference>
<dbReference type="InterPro" id="IPR015847">
    <property type="entry name" value="ExoRNase_PH_dom2"/>
</dbReference>
<dbReference type="InterPro" id="IPR036345">
    <property type="entry name" value="ExoRNase_PH_dom2_sf"/>
</dbReference>
<dbReference type="InterPro" id="IPR004087">
    <property type="entry name" value="KH_dom"/>
</dbReference>
<dbReference type="InterPro" id="IPR004088">
    <property type="entry name" value="KH_dom_type_1"/>
</dbReference>
<dbReference type="InterPro" id="IPR036612">
    <property type="entry name" value="KH_dom_type_1_sf"/>
</dbReference>
<dbReference type="InterPro" id="IPR012340">
    <property type="entry name" value="NA-bd_OB-fold"/>
</dbReference>
<dbReference type="InterPro" id="IPR012162">
    <property type="entry name" value="PNPase"/>
</dbReference>
<dbReference type="InterPro" id="IPR027408">
    <property type="entry name" value="PNPase/RNase_PH_dom_sf"/>
</dbReference>
<dbReference type="InterPro" id="IPR015848">
    <property type="entry name" value="PNPase_PH_RNA-bd_bac/org-type"/>
</dbReference>
<dbReference type="InterPro" id="IPR020568">
    <property type="entry name" value="Ribosomal_Su5_D2-typ_SF"/>
</dbReference>
<dbReference type="InterPro" id="IPR003029">
    <property type="entry name" value="S1_domain"/>
</dbReference>
<dbReference type="NCBIfam" id="TIGR03591">
    <property type="entry name" value="polynuc_phos"/>
    <property type="match status" value="1"/>
</dbReference>
<dbReference type="NCBIfam" id="NF008805">
    <property type="entry name" value="PRK11824.1"/>
    <property type="match status" value="1"/>
</dbReference>
<dbReference type="PANTHER" id="PTHR11252">
    <property type="entry name" value="POLYRIBONUCLEOTIDE NUCLEOTIDYLTRANSFERASE"/>
    <property type="match status" value="1"/>
</dbReference>
<dbReference type="PANTHER" id="PTHR11252:SF0">
    <property type="entry name" value="POLYRIBONUCLEOTIDE NUCLEOTIDYLTRANSFERASE 1, MITOCHONDRIAL"/>
    <property type="match status" value="1"/>
</dbReference>
<dbReference type="Pfam" id="PF00013">
    <property type="entry name" value="KH_1"/>
    <property type="match status" value="1"/>
</dbReference>
<dbReference type="Pfam" id="PF03726">
    <property type="entry name" value="PNPase"/>
    <property type="match status" value="1"/>
</dbReference>
<dbReference type="Pfam" id="PF01138">
    <property type="entry name" value="RNase_PH"/>
    <property type="match status" value="2"/>
</dbReference>
<dbReference type="Pfam" id="PF03725">
    <property type="entry name" value="RNase_PH_C"/>
    <property type="match status" value="2"/>
</dbReference>
<dbReference type="Pfam" id="PF00575">
    <property type="entry name" value="S1"/>
    <property type="match status" value="1"/>
</dbReference>
<dbReference type="PIRSF" id="PIRSF005499">
    <property type="entry name" value="PNPase"/>
    <property type="match status" value="1"/>
</dbReference>
<dbReference type="SMART" id="SM00322">
    <property type="entry name" value="KH"/>
    <property type="match status" value="1"/>
</dbReference>
<dbReference type="SMART" id="SM00316">
    <property type="entry name" value="S1"/>
    <property type="match status" value="1"/>
</dbReference>
<dbReference type="SUPFAM" id="SSF54791">
    <property type="entry name" value="Eukaryotic type KH-domain (KH-domain type I)"/>
    <property type="match status" value="1"/>
</dbReference>
<dbReference type="SUPFAM" id="SSF50249">
    <property type="entry name" value="Nucleic acid-binding proteins"/>
    <property type="match status" value="1"/>
</dbReference>
<dbReference type="SUPFAM" id="SSF55666">
    <property type="entry name" value="Ribonuclease PH domain 2-like"/>
    <property type="match status" value="2"/>
</dbReference>
<dbReference type="SUPFAM" id="SSF54211">
    <property type="entry name" value="Ribosomal protein S5 domain 2-like"/>
    <property type="match status" value="2"/>
</dbReference>
<dbReference type="PROSITE" id="PS50084">
    <property type="entry name" value="KH_TYPE_1"/>
    <property type="match status" value="1"/>
</dbReference>
<dbReference type="PROSITE" id="PS50126">
    <property type="entry name" value="S1"/>
    <property type="match status" value="1"/>
</dbReference>
<evidence type="ECO:0000255" key="1">
    <source>
        <dbReference type="HAMAP-Rule" id="MF_01595"/>
    </source>
</evidence>
<accession>C3LSQ2</accession>
<feature type="chain" id="PRO_1000185761" description="Polyribonucleotide nucleotidyltransferase">
    <location>
        <begin position="1"/>
        <end position="709"/>
    </location>
</feature>
<feature type="domain" description="KH" evidence="1">
    <location>
        <begin position="554"/>
        <end position="613"/>
    </location>
</feature>
<feature type="domain" description="S1 motif" evidence="1">
    <location>
        <begin position="623"/>
        <end position="691"/>
    </location>
</feature>
<feature type="binding site" evidence="1">
    <location>
        <position position="487"/>
    </location>
    <ligand>
        <name>Mg(2+)</name>
        <dbReference type="ChEBI" id="CHEBI:18420"/>
    </ligand>
</feature>
<feature type="binding site" evidence="1">
    <location>
        <position position="493"/>
    </location>
    <ligand>
        <name>Mg(2+)</name>
        <dbReference type="ChEBI" id="CHEBI:18420"/>
    </ligand>
</feature>
<sequence>MFEKPVVKTFQYGNHTVTLETGVMARQATAAVMATMDDTAVFVSVVGKKEAVVGQDFFPLTVNYQERTYAAGKIPGGFFKREGRPSEGETLIARLIDRPIRPLFPDGFTNEVQVIATVVSVNPDVQPDIISMIGTSAALAISGLPFNGPIGAARVGHIDGQLVLNPSEKELKQSRLDLVVAGTDNAVLMVESEAQILTEEEMLAAVVFGHDQQQAVIKAINEFAAEVATPAWEWVAPAENTELKAKVAALAETRLVEAYQITEKMARYDRIHEISAEVTAALLAENEALDTKEIHTIFHDLEKTVVRRSIIAGNPRIDGREKDMVRALDVRTGVLPRTHGSALFTRGETQALVTATLGTQRDAQIIDELTGEKKDHFLLHYNFPPYCVGETGFVGSPKRREIGHGRLAKRGIAAVMPSPEEFPYTVRVVSEITESNGSSSMASVCGSSLALMDAGVPIKASVAGIAMGLVKEENDFVVLSDILGDEDHLGDMDFKVAGTATGVTALQMDIKIEGITKEIMQIALNQAKGARLHILSVMDQAISAARSDISEFAPRIHTMKISVEKIKDVIGKGGAVIRQLTEETGTTIEIEDDGTIKIAATDGDQAKEAIRRIQEITAEVEVGVIYTGKVARLADFGAFVTILPGKDGLVHISQIADKRVEKVSDYLTEGQEVQVKVLEIDRQGRVRLSMKEAVETSDAAAAEVAPQAE</sequence>
<comment type="function">
    <text evidence="1">Involved in mRNA degradation. Catalyzes the phosphorolysis of single-stranded polyribonucleotides processively in the 3'- to 5'-direction.</text>
</comment>
<comment type="catalytic activity">
    <reaction evidence="1">
        <text>RNA(n+1) + phosphate = RNA(n) + a ribonucleoside 5'-diphosphate</text>
        <dbReference type="Rhea" id="RHEA:22096"/>
        <dbReference type="Rhea" id="RHEA-COMP:14527"/>
        <dbReference type="Rhea" id="RHEA-COMP:17342"/>
        <dbReference type="ChEBI" id="CHEBI:43474"/>
        <dbReference type="ChEBI" id="CHEBI:57930"/>
        <dbReference type="ChEBI" id="CHEBI:140395"/>
        <dbReference type="EC" id="2.7.7.8"/>
    </reaction>
</comment>
<comment type="cofactor">
    <cofactor evidence="1">
        <name>Mg(2+)</name>
        <dbReference type="ChEBI" id="CHEBI:18420"/>
    </cofactor>
</comment>
<comment type="subunit">
    <text evidence="1">Component of the RNA degradosome, which is a multiprotein complex involved in RNA processing and mRNA degradation.</text>
</comment>
<comment type="subcellular location">
    <subcellularLocation>
        <location evidence="1">Cytoplasm</location>
    </subcellularLocation>
</comment>
<comment type="similarity">
    <text evidence="1">Belongs to the polyribonucleotide nucleotidyltransferase family.</text>
</comment>
<reference key="1">
    <citation type="journal article" date="2008" name="PLoS ONE">
        <title>A recalibrated molecular clock and independent origins for the cholera pandemic clones.</title>
        <authorList>
            <person name="Feng L."/>
            <person name="Reeves P.R."/>
            <person name="Lan R."/>
            <person name="Ren Y."/>
            <person name="Gao C."/>
            <person name="Zhou Z."/>
            <person name="Ren Y."/>
            <person name="Cheng J."/>
            <person name="Wang W."/>
            <person name="Wang J."/>
            <person name="Qian W."/>
            <person name="Li D."/>
            <person name="Wang L."/>
        </authorList>
    </citation>
    <scope>NUCLEOTIDE SEQUENCE [LARGE SCALE GENOMIC DNA]</scope>
    <source>
        <strain>M66-2</strain>
    </source>
</reference>